<protein>
    <recommendedName>
        <fullName evidence="1">Large ribosomal subunit protein uL23</fullName>
    </recommendedName>
    <alternativeName>
        <fullName evidence="2">50S ribosomal protein L23</fullName>
    </alternativeName>
</protein>
<dbReference type="EMBL" id="CP000712">
    <property type="protein sequence ID" value="ABQ76659.1"/>
    <property type="molecule type" value="Genomic_DNA"/>
</dbReference>
<dbReference type="SMR" id="A5VXP9"/>
<dbReference type="KEGG" id="ppf:Pput_0489"/>
<dbReference type="eggNOG" id="COG0089">
    <property type="taxonomic scope" value="Bacteria"/>
</dbReference>
<dbReference type="HOGENOM" id="CLU_037562_3_1_6"/>
<dbReference type="GO" id="GO:1990904">
    <property type="term" value="C:ribonucleoprotein complex"/>
    <property type="evidence" value="ECO:0007669"/>
    <property type="project" value="UniProtKB-KW"/>
</dbReference>
<dbReference type="GO" id="GO:0005840">
    <property type="term" value="C:ribosome"/>
    <property type="evidence" value="ECO:0007669"/>
    <property type="project" value="UniProtKB-KW"/>
</dbReference>
<dbReference type="GO" id="GO:0019843">
    <property type="term" value="F:rRNA binding"/>
    <property type="evidence" value="ECO:0007669"/>
    <property type="project" value="UniProtKB-UniRule"/>
</dbReference>
<dbReference type="GO" id="GO:0003735">
    <property type="term" value="F:structural constituent of ribosome"/>
    <property type="evidence" value="ECO:0007669"/>
    <property type="project" value="InterPro"/>
</dbReference>
<dbReference type="GO" id="GO:0006412">
    <property type="term" value="P:translation"/>
    <property type="evidence" value="ECO:0007669"/>
    <property type="project" value="UniProtKB-UniRule"/>
</dbReference>
<dbReference type="FunFam" id="3.30.70.330:FF:000001">
    <property type="entry name" value="50S ribosomal protein L23"/>
    <property type="match status" value="1"/>
</dbReference>
<dbReference type="Gene3D" id="3.30.70.330">
    <property type="match status" value="1"/>
</dbReference>
<dbReference type="HAMAP" id="MF_01369_B">
    <property type="entry name" value="Ribosomal_uL23_B"/>
    <property type="match status" value="1"/>
</dbReference>
<dbReference type="InterPro" id="IPR012677">
    <property type="entry name" value="Nucleotide-bd_a/b_plait_sf"/>
</dbReference>
<dbReference type="InterPro" id="IPR013025">
    <property type="entry name" value="Ribosomal_uL23-like"/>
</dbReference>
<dbReference type="InterPro" id="IPR012678">
    <property type="entry name" value="Ribosomal_uL23/eL15/eS24_sf"/>
</dbReference>
<dbReference type="NCBIfam" id="NF004359">
    <property type="entry name" value="PRK05738.1-3"/>
    <property type="match status" value="1"/>
</dbReference>
<dbReference type="NCBIfam" id="NF004363">
    <property type="entry name" value="PRK05738.2-4"/>
    <property type="match status" value="1"/>
</dbReference>
<dbReference type="PANTHER" id="PTHR11620">
    <property type="entry name" value="60S RIBOSOMAL PROTEIN L23A"/>
    <property type="match status" value="1"/>
</dbReference>
<dbReference type="Pfam" id="PF00276">
    <property type="entry name" value="Ribosomal_L23"/>
    <property type="match status" value="1"/>
</dbReference>
<dbReference type="SUPFAM" id="SSF54189">
    <property type="entry name" value="Ribosomal proteins S24e, L23 and L15e"/>
    <property type="match status" value="1"/>
</dbReference>
<organism>
    <name type="scientific">Pseudomonas putida (strain ATCC 700007 / DSM 6899 / JCM 31910 / BCRC 17059 / LMG 24140 / F1)</name>
    <dbReference type="NCBI Taxonomy" id="351746"/>
    <lineage>
        <taxon>Bacteria</taxon>
        <taxon>Pseudomonadati</taxon>
        <taxon>Pseudomonadota</taxon>
        <taxon>Gammaproteobacteria</taxon>
        <taxon>Pseudomonadales</taxon>
        <taxon>Pseudomonadaceae</taxon>
        <taxon>Pseudomonas</taxon>
    </lineage>
</organism>
<evidence type="ECO:0000255" key="1">
    <source>
        <dbReference type="HAMAP-Rule" id="MF_01369"/>
    </source>
</evidence>
<evidence type="ECO:0000305" key="2"/>
<sequence length="99" mass="10900">MNQERVFKVLLGPHVSEKATVLAEKKGQFVFKVATDATKLEIKKAVEGLFNVKVENVSTVNVLGKTKRTARGLGKRNDWKKAIVSLQPGQDLDFSSSAE</sequence>
<reference key="1">
    <citation type="submission" date="2007-05" db="EMBL/GenBank/DDBJ databases">
        <title>Complete sequence of Pseudomonas putida F1.</title>
        <authorList>
            <consortium name="US DOE Joint Genome Institute"/>
            <person name="Copeland A."/>
            <person name="Lucas S."/>
            <person name="Lapidus A."/>
            <person name="Barry K."/>
            <person name="Detter J.C."/>
            <person name="Glavina del Rio T."/>
            <person name="Hammon N."/>
            <person name="Israni S."/>
            <person name="Dalin E."/>
            <person name="Tice H."/>
            <person name="Pitluck S."/>
            <person name="Chain P."/>
            <person name="Malfatti S."/>
            <person name="Shin M."/>
            <person name="Vergez L."/>
            <person name="Schmutz J."/>
            <person name="Larimer F."/>
            <person name="Land M."/>
            <person name="Hauser L."/>
            <person name="Kyrpides N."/>
            <person name="Lykidis A."/>
            <person name="Parales R."/>
            <person name="Richardson P."/>
        </authorList>
    </citation>
    <scope>NUCLEOTIDE SEQUENCE [LARGE SCALE GENOMIC DNA]</scope>
    <source>
        <strain>ATCC 700007 / DSM 6899 / JCM 31910 / BCRC 17059 / LMG 24140 / F1</strain>
    </source>
</reference>
<proteinExistence type="inferred from homology"/>
<feature type="chain" id="PRO_1000068142" description="Large ribosomal subunit protein uL23">
    <location>
        <begin position="1"/>
        <end position="99"/>
    </location>
</feature>
<keyword id="KW-0687">Ribonucleoprotein</keyword>
<keyword id="KW-0689">Ribosomal protein</keyword>
<keyword id="KW-0694">RNA-binding</keyword>
<keyword id="KW-0699">rRNA-binding</keyword>
<accession>A5VXP9</accession>
<name>RL23_PSEP1</name>
<comment type="function">
    <text evidence="1">One of the early assembly proteins it binds 23S rRNA. One of the proteins that surrounds the polypeptide exit tunnel on the outside of the ribosome. Forms the main docking site for trigger factor binding to the ribosome.</text>
</comment>
<comment type="subunit">
    <text evidence="1">Part of the 50S ribosomal subunit. Contacts protein L29, and trigger factor when it is bound to the ribosome.</text>
</comment>
<comment type="similarity">
    <text evidence="1">Belongs to the universal ribosomal protein uL23 family.</text>
</comment>
<gene>
    <name evidence="1" type="primary">rplW</name>
    <name type="ordered locus">Pput_0489</name>
</gene>